<sequence length="269" mass="30318">MPELPEVETSRRGIEPHLVGATILHAVVRNGRLRWPVSEEIYRLSDQPVLSVQRRAKYLLLELPEGWIIIHLGMSGSLRILPEELPPEKHDHVDLVMSNGKVLRYTDPRRFGAWLWTKELEGHNVLAHLGPEPLSDDFNGEYLHQKCEKKKTAIKPWLMDNKLVVGVGNIYASESLFAAGIHPDRLASSLSLAECELLARVIKAVLLRSIEQGGTTLKDFLQSDGKPGYFAQELQVYGRKGEPCRVCGTPIVATKHAQRATFYCRQCQK</sequence>
<evidence type="ECO:0000250" key="1"/>
<evidence type="ECO:0000255" key="2">
    <source>
        <dbReference type="HAMAP-Rule" id="MF_00103"/>
    </source>
</evidence>
<feature type="initiator methionine" description="Removed" evidence="1">
    <location>
        <position position="1"/>
    </location>
</feature>
<feature type="chain" id="PRO_0000170823" description="Formamidopyrimidine-DNA glycosylase">
    <location>
        <begin position="2"/>
        <end position="269"/>
    </location>
</feature>
<feature type="zinc finger region" description="FPG-type" evidence="2">
    <location>
        <begin position="235"/>
        <end position="269"/>
    </location>
</feature>
<feature type="active site" description="Schiff-base intermediate with DNA" evidence="2">
    <location>
        <position position="2"/>
    </location>
</feature>
<feature type="active site" description="Proton donor" evidence="2">
    <location>
        <position position="3"/>
    </location>
</feature>
<feature type="active site" description="Proton donor; for beta-elimination activity" evidence="2">
    <location>
        <position position="57"/>
    </location>
</feature>
<feature type="active site" description="Proton donor; for delta-elimination activity" evidence="2">
    <location>
        <position position="259"/>
    </location>
</feature>
<feature type="binding site" evidence="2">
    <location>
        <position position="90"/>
    </location>
    <ligand>
        <name>DNA</name>
        <dbReference type="ChEBI" id="CHEBI:16991"/>
    </ligand>
</feature>
<feature type="binding site" evidence="2">
    <location>
        <position position="109"/>
    </location>
    <ligand>
        <name>DNA</name>
        <dbReference type="ChEBI" id="CHEBI:16991"/>
    </ligand>
</feature>
<feature type="binding site" evidence="2">
    <location>
        <position position="150"/>
    </location>
    <ligand>
        <name>DNA</name>
        <dbReference type="ChEBI" id="CHEBI:16991"/>
    </ligand>
</feature>
<name>FPG_ECOL6</name>
<dbReference type="EC" id="3.2.2.23" evidence="2"/>
<dbReference type="EC" id="4.2.99.18" evidence="2"/>
<dbReference type="EMBL" id="AE014075">
    <property type="protein sequence ID" value="AAN82895.1"/>
    <property type="molecule type" value="Genomic_DNA"/>
</dbReference>
<dbReference type="RefSeq" id="WP_001114542.1">
    <property type="nucleotide sequence ID" value="NZ_CP051263.1"/>
</dbReference>
<dbReference type="SMR" id="Q8FC87"/>
<dbReference type="STRING" id="199310.c4459"/>
<dbReference type="KEGG" id="ecc:c4459"/>
<dbReference type="eggNOG" id="COG0266">
    <property type="taxonomic scope" value="Bacteria"/>
</dbReference>
<dbReference type="HOGENOM" id="CLU_038423_1_1_6"/>
<dbReference type="BioCyc" id="ECOL199310:C4459-MONOMER"/>
<dbReference type="Proteomes" id="UP000001410">
    <property type="component" value="Chromosome"/>
</dbReference>
<dbReference type="GO" id="GO:0034039">
    <property type="term" value="F:8-oxo-7,8-dihydroguanine DNA N-glycosylase activity"/>
    <property type="evidence" value="ECO:0007669"/>
    <property type="project" value="TreeGrafter"/>
</dbReference>
<dbReference type="GO" id="GO:0140078">
    <property type="term" value="F:class I DNA-(apurinic or apyrimidinic site) endonuclease activity"/>
    <property type="evidence" value="ECO:0007669"/>
    <property type="project" value="UniProtKB-EC"/>
</dbReference>
<dbReference type="GO" id="GO:0003684">
    <property type="term" value="F:damaged DNA binding"/>
    <property type="evidence" value="ECO:0007669"/>
    <property type="project" value="InterPro"/>
</dbReference>
<dbReference type="GO" id="GO:0008270">
    <property type="term" value="F:zinc ion binding"/>
    <property type="evidence" value="ECO:0007669"/>
    <property type="project" value="UniProtKB-UniRule"/>
</dbReference>
<dbReference type="GO" id="GO:0006284">
    <property type="term" value="P:base-excision repair"/>
    <property type="evidence" value="ECO:0007669"/>
    <property type="project" value="InterPro"/>
</dbReference>
<dbReference type="CDD" id="cd08966">
    <property type="entry name" value="EcFpg-like_N"/>
    <property type="match status" value="1"/>
</dbReference>
<dbReference type="FunFam" id="1.10.8.50:FF:000003">
    <property type="entry name" value="Formamidopyrimidine-DNA glycosylase"/>
    <property type="match status" value="1"/>
</dbReference>
<dbReference type="FunFam" id="3.20.190.10:FF:000001">
    <property type="entry name" value="Formamidopyrimidine-DNA glycosylase"/>
    <property type="match status" value="1"/>
</dbReference>
<dbReference type="Gene3D" id="1.10.8.50">
    <property type="match status" value="1"/>
</dbReference>
<dbReference type="Gene3D" id="3.20.190.10">
    <property type="entry name" value="MutM-like, N-terminal"/>
    <property type="match status" value="1"/>
</dbReference>
<dbReference type="HAMAP" id="MF_00103">
    <property type="entry name" value="Fapy_DNA_glycosyl"/>
    <property type="match status" value="1"/>
</dbReference>
<dbReference type="InterPro" id="IPR015886">
    <property type="entry name" value="DNA_glyclase/AP_lyase_DNA-bd"/>
</dbReference>
<dbReference type="InterPro" id="IPR015887">
    <property type="entry name" value="DNA_glyclase_Znf_dom_DNA_BS"/>
</dbReference>
<dbReference type="InterPro" id="IPR020629">
    <property type="entry name" value="Formamido-pyr_DNA_Glyclase"/>
</dbReference>
<dbReference type="InterPro" id="IPR012319">
    <property type="entry name" value="FPG_cat"/>
</dbReference>
<dbReference type="InterPro" id="IPR035937">
    <property type="entry name" value="MutM-like_N-ter"/>
</dbReference>
<dbReference type="InterPro" id="IPR010979">
    <property type="entry name" value="Ribosomal_uS13-like_H2TH"/>
</dbReference>
<dbReference type="InterPro" id="IPR000214">
    <property type="entry name" value="Znf_DNA_glyclase/AP_lyase"/>
</dbReference>
<dbReference type="InterPro" id="IPR010663">
    <property type="entry name" value="Znf_FPG/IleRS"/>
</dbReference>
<dbReference type="NCBIfam" id="TIGR00577">
    <property type="entry name" value="fpg"/>
    <property type="match status" value="1"/>
</dbReference>
<dbReference type="NCBIfam" id="NF002211">
    <property type="entry name" value="PRK01103.1"/>
    <property type="match status" value="1"/>
</dbReference>
<dbReference type="PANTHER" id="PTHR22993">
    <property type="entry name" value="FORMAMIDOPYRIMIDINE-DNA GLYCOSYLASE"/>
    <property type="match status" value="1"/>
</dbReference>
<dbReference type="PANTHER" id="PTHR22993:SF9">
    <property type="entry name" value="FORMAMIDOPYRIMIDINE-DNA GLYCOSYLASE"/>
    <property type="match status" value="1"/>
</dbReference>
<dbReference type="Pfam" id="PF01149">
    <property type="entry name" value="Fapy_DNA_glyco"/>
    <property type="match status" value="1"/>
</dbReference>
<dbReference type="Pfam" id="PF06831">
    <property type="entry name" value="H2TH"/>
    <property type="match status" value="1"/>
</dbReference>
<dbReference type="Pfam" id="PF06827">
    <property type="entry name" value="zf-FPG_IleRS"/>
    <property type="match status" value="1"/>
</dbReference>
<dbReference type="SMART" id="SM00898">
    <property type="entry name" value="Fapy_DNA_glyco"/>
    <property type="match status" value="1"/>
</dbReference>
<dbReference type="SMART" id="SM01232">
    <property type="entry name" value="H2TH"/>
    <property type="match status" value="1"/>
</dbReference>
<dbReference type="SUPFAM" id="SSF57716">
    <property type="entry name" value="Glucocorticoid receptor-like (DNA-binding domain)"/>
    <property type="match status" value="1"/>
</dbReference>
<dbReference type="SUPFAM" id="SSF81624">
    <property type="entry name" value="N-terminal domain of MutM-like DNA repair proteins"/>
    <property type="match status" value="1"/>
</dbReference>
<dbReference type="SUPFAM" id="SSF46946">
    <property type="entry name" value="S13-like H2TH domain"/>
    <property type="match status" value="1"/>
</dbReference>
<dbReference type="PROSITE" id="PS51068">
    <property type="entry name" value="FPG_CAT"/>
    <property type="match status" value="1"/>
</dbReference>
<dbReference type="PROSITE" id="PS01242">
    <property type="entry name" value="ZF_FPG_1"/>
    <property type="match status" value="1"/>
</dbReference>
<dbReference type="PROSITE" id="PS51066">
    <property type="entry name" value="ZF_FPG_2"/>
    <property type="match status" value="1"/>
</dbReference>
<accession>Q8FC87</accession>
<organism>
    <name type="scientific">Escherichia coli O6:H1 (strain CFT073 / ATCC 700928 / UPEC)</name>
    <dbReference type="NCBI Taxonomy" id="199310"/>
    <lineage>
        <taxon>Bacteria</taxon>
        <taxon>Pseudomonadati</taxon>
        <taxon>Pseudomonadota</taxon>
        <taxon>Gammaproteobacteria</taxon>
        <taxon>Enterobacterales</taxon>
        <taxon>Enterobacteriaceae</taxon>
        <taxon>Escherichia</taxon>
    </lineage>
</organism>
<protein>
    <recommendedName>
        <fullName evidence="2">Formamidopyrimidine-DNA glycosylase</fullName>
        <shortName evidence="2">Fapy-DNA glycosylase</shortName>
        <ecNumber evidence="2">3.2.2.23</ecNumber>
    </recommendedName>
    <alternativeName>
        <fullName evidence="2">DNA-(apurinic or apyrimidinic site) lyase MutM</fullName>
        <shortName evidence="2">AP lyase MutM</shortName>
        <ecNumber evidence="2">4.2.99.18</ecNumber>
    </alternativeName>
</protein>
<keyword id="KW-0227">DNA damage</keyword>
<keyword id="KW-0234">DNA repair</keyword>
<keyword id="KW-0238">DNA-binding</keyword>
<keyword id="KW-0326">Glycosidase</keyword>
<keyword id="KW-0378">Hydrolase</keyword>
<keyword id="KW-0456">Lyase</keyword>
<keyword id="KW-0479">Metal-binding</keyword>
<keyword id="KW-0511">Multifunctional enzyme</keyword>
<keyword id="KW-1185">Reference proteome</keyword>
<keyword id="KW-0862">Zinc</keyword>
<keyword id="KW-0863">Zinc-finger</keyword>
<gene>
    <name evidence="2" type="primary">mutM</name>
    <name evidence="2" type="synonym">fpg</name>
    <name type="ordered locus">c4459</name>
</gene>
<reference key="1">
    <citation type="journal article" date="2002" name="Proc. Natl. Acad. Sci. U.S.A.">
        <title>Extensive mosaic structure revealed by the complete genome sequence of uropathogenic Escherichia coli.</title>
        <authorList>
            <person name="Welch R.A."/>
            <person name="Burland V."/>
            <person name="Plunkett G. III"/>
            <person name="Redford P."/>
            <person name="Roesch P."/>
            <person name="Rasko D."/>
            <person name="Buckles E.L."/>
            <person name="Liou S.-R."/>
            <person name="Boutin A."/>
            <person name="Hackett J."/>
            <person name="Stroud D."/>
            <person name="Mayhew G.F."/>
            <person name="Rose D.J."/>
            <person name="Zhou S."/>
            <person name="Schwartz D.C."/>
            <person name="Perna N.T."/>
            <person name="Mobley H.L.T."/>
            <person name="Donnenberg M.S."/>
            <person name="Blattner F.R."/>
        </authorList>
    </citation>
    <scope>NUCLEOTIDE SEQUENCE [LARGE SCALE GENOMIC DNA]</scope>
    <source>
        <strain>CFT073 / ATCC 700928 / UPEC</strain>
    </source>
</reference>
<comment type="function">
    <text evidence="2">Involved in base excision repair of DNA damaged by oxidation or by mutagenic agents. Acts as a DNA glycosylase that recognizes and removes damaged bases. Has a preference for oxidized purines, such as 7,8-dihydro-8-oxoguanine (8-oxoG). Has AP (apurinic/apyrimidinic) lyase activity and introduces nicks in the DNA strand. Cleaves the DNA backbone by beta-delta elimination to generate a single-strand break at the site of the removed base with both 3'- and 5'-phosphates.</text>
</comment>
<comment type="catalytic activity">
    <reaction evidence="2">
        <text>Hydrolysis of DNA containing ring-opened 7-methylguanine residues, releasing 2,6-diamino-4-hydroxy-5-(N-methyl)formamidopyrimidine.</text>
        <dbReference type="EC" id="3.2.2.23"/>
    </reaction>
</comment>
<comment type="catalytic activity">
    <reaction evidence="2">
        <text>2'-deoxyribonucleotide-(2'-deoxyribose 5'-phosphate)-2'-deoxyribonucleotide-DNA = a 3'-end 2'-deoxyribonucleotide-(2,3-dehydro-2,3-deoxyribose 5'-phosphate)-DNA + a 5'-end 5'-phospho-2'-deoxyribonucleoside-DNA + H(+)</text>
        <dbReference type="Rhea" id="RHEA:66592"/>
        <dbReference type="Rhea" id="RHEA-COMP:13180"/>
        <dbReference type="Rhea" id="RHEA-COMP:16897"/>
        <dbReference type="Rhea" id="RHEA-COMP:17067"/>
        <dbReference type="ChEBI" id="CHEBI:15378"/>
        <dbReference type="ChEBI" id="CHEBI:136412"/>
        <dbReference type="ChEBI" id="CHEBI:157695"/>
        <dbReference type="ChEBI" id="CHEBI:167181"/>
        <dbReference type="EC" id="4.2.99.18"/>
    </reaction>
</comment>
<comment type="cofactor">
    <cofactor evidence="2">
        <name>Zn(2+)</name>
        <dbReference type="ChEBI" id="CHEBI:29105"/>
    </cofactor>
    <text evidence="2">Binds 1 zinc ion per subunit.</text>
</comment>
<comment type="subunit">
    <text evidence="2">Monomer.</text>
</comment>
<comment type="similarity">
    <text evidence="2">Belongs to the FPG family.</text>
</comment>
<proteinExistence type="inferred from homology"/>